<protein>
    <recommendedName>
        <fullName evidence="4">Conotoxin Vc7.3</fullName>
    </recommendedName>
</protein>
<name>CU73_CONVC</name>
<evidence type="ECO:0000250" key="1">
    <source>
        <dbReference type="UniProtKB" id="P0DPM3"/>
    </source>
</evidence>
<evidence type="ECO:0000250" key="2">
    <source>
        <dbReference type="UniProtKB" id="Q26443"/>
    </source>
</evidence>
<evidence type="ECO:0000255" key="3"/>
<evidence type="ECO:0000303" key="4">
    <source>
    </source>
</evidence>
<evidence type="ECO:0000305" key="5"/>
<evidence type="ECO:0000305" key="6">
    <source>
    </source>
</evidence>
<evidence type="ECO:0000312" key="7">
    <source>
        <dbReference type="EMBL" id="JAB84617.1"/>
    </source>
</evidence>
<organism>
    <name type="scientific">Conus victoriae</name>
    <name type="common">Queen Victoria cone</name>
    <dbReference type="NCBI Taxonomy" id="319920"/>
    <lineage>
        <taxon>Eukaryota</taxon>
        <taxon>Metazoa</taxon>
        <taxon>Spiralia</taxon>
        <taxon>Lophotrochozoa</taxon>
        <taxon>Mollusca</taxon>
        <taxon>Gastropoda</taxon>
        <taxon>Caenogastropoda</taxon>
        <taxon>Neogastropoda</taxon>
        <taxon>Conoidea</taxon>
        <taxon>Conidae</taxon>
        <taxon>Conus</taxon>
        <taxon>Cylinder</taxon>
    </lineage>
</organism>
<keyword id="KW-1015">Disulfide bond</keyword>
<keyword id="KW-0964">Secreted</keyword>
<keyword id="KW-0732">Signal</keyword>
<feature type="signal peptide" evidence="3">
    <location>
        <begin position="1"/>
        <end position="24"/>
    </location>
</feature>
<feature type="propeptide" id="PRO_0000454996" evidence="6">
    <location>
        <begin position="25"/>
        <end position="45"/>
    </location>
</feature>
<feature type="peptide" id="PRO_5004852201" description="Conotoxin Vc7.3" evidence="6">
    <location>
        <begin position="46"/>
        <end position="68"/>
    </location>
</feature>
<feature type="disulfide bond" evidence="2">
    <location>
        <begin position="47"/>
        <end position="55"/>
    </location>
</feature>
<feature type="disulfide bond" evidence="2">
    <location>
        <begin position="50"/>
        <end position="60"/>
    </location>
</feature>
<feature type="disulfide bond" evidence="2">
    <location>
        <begin position="54"/>
        <end position="65"/>
    </location>
</feature>
<sequence length="68" mass="7648">MIRMGFFLTLTVAVLLTSLICTEAVPTDKRGMERLFDQVLLKDQRNCPYCVVYCCPPAYCQASGCRPP</sequence>
<proteinExistence type="inferred from homology"/>
<reference evidence="7" key="1">
    <citation type="journal article" date="2014" name="PLoS ONE">
        <title>Diversity of conotoxin gene superfamilies in the venomous snail, Conus victoriae.</title>
        <authorList>
            <person name="Robinson S.D."/>
            <person name="Safavi-Hemami H."/>
            <person name="McIntosh L.D."/>
            <person name="Purcell A.W."/>
            <person name="Norton R.S."/>
            <person name="Papenfuss A.T."/>
        </authorList>
    </citation>
    <scope>NUCLEOTIDE SEQUENCE [MRNA]</scope>
    <source>
        <tissue>Venom gland</tissue>
    </source>
</reference>
<accession>W4VSE7</accession>
<dbReference type="EMBL" id="GAIH01000100">
    <property type="protein sequence ID" value="JAB84617.1"/>
    <property type="molecule type" value="mRNA"/>
</dbReference>
<dbReference type="GO" id="GO:0005576">
    <property type="term" value="C:extracellular region"/>
    <property type="evidence" value="ECO:0007669"/>
    <property type="project" value="UniProtKB-SubCell"/>
</dbReference>
<comment type="subcellular location">
    <subcellularLocation>
        <location evidence="6">Secreted</location>
    </subcellularLocation>
</comment>
<comment type="tissue specificity">
    <text evidence="6">Expressed by the venom duct.</text>
</comment>
<comment type="domain">
    <text evidence="5">The cysteine framework is VI/VII (C-C-CC-C-C).</text>
</comment>
<comment type="domain">
    <text evidence="1">Displays a mini-granulin fold, a structure composed of two short, stacked beta-hairpins connected by two parallel disulfide bonds. This newly described fold is derived from the same cysteine connectivity as knottins (ICK fold). The name 'mini-granulin fold' comes from the structural homology with the N-terminal region of the human granulin.</text>
</comment>
<comment type="similarity">
    <text evidence="5">Belongs to the conotoxin U superfamily.</text>
</comment>